<comment type="function">
    <text evidence="3">When injected intracranially in mice, induces a series of symptoms such as quivering, climbing, scratching, barrel rolling and paralysis of limbs. Unexpectedly, no effect is observed on ionic currents when tested on locust DUM neuron.</text>
</comment>
<comment type="subcellular location">
    <subcellularLocation>
        <location>Secreted</location>
    </subcellularLocation>
</comment>
<comment type="tissue specificity">
    <text>Expressed by the venom duct.</text>
</comment>
<comment type="domain">
    <text evidence="1">The presence of a 'disulfide through disulfide knot' structurally defines this protein as a knottin.</text>
</comment>
<comment type="domain">
    <text>The cysteine framework is VI/VII (C-C-CC-C-C).</text>
</comment>
<comment type="mass spectrometry" mass="2775.8" method="MALDI" evidence="3"/>
<comment type="similarity">
    <text evidence="4">Belongs to the conotoxin O1 superfamily.</text>
</comment>
<proteinExistence type="evidence at protein level"/>
<evidence type="ECO:0000250" key="1"/>
<evidence type="ECO:0000255" key="2"/>
<evidence type="ECO:0000269" key="3">
    <source>
    </source>
</evidence>
<evidence type="ECO:0000305" key="4"/>
<dbReference type="EMBL" id="AF548000">
    <property type="protein sequence ID" value="AAO21703.1"/>
    <property type="molecule type" value="mRNA"/>
</dbReference>
<dbReference type="SMR" id="Q86RA3"/>
<dbReference type="ConoServer" id="824">
    <property type="toxin name" value="VxVIA precursor"/>
</dbReference>
<dbReference type="GO" id="GO:0005576">
    <property type="term" value="C:extracellular region"/>
    <property type="evidence" value="ECO:0007669"/>
    <property type="project" value="UniProtKB-SubCell"/>
</dbReference>
<dbReference type="GO" id="GO:0008200">
    <property type="term" value="F:ion channel inhibitor activity"/>
    <property type="evidence" value="ECO:0007669"/>
    <property type="project" value="InterPro"/>
</dbReference>
<dbReference type="GO" id="GO:0090729">
    <property type="term" value="F:toxin activity"/>
    <property type="evidence" value="ECO:0007669"/>
    <property type="project" value="UniProtKB-KW"/>
</dbReference>
<dbReference type="InterPro" id="IPR004214">
    <property type="entry name" value="Conotoxin"/>
</dbReference>
<dbReference type="InterPro" id="IPR018072">
    <property type="entry name" value="Conotoxin_a-typ_CS"/>
</dbReference>
<dbReference type="Pfam" id="PF02950">
    <property type="entry name" value="Conotoxin"/>
    <property type="match status" value="1"/>
</dbReference>
<dbReference type="PROSITE" id="PS60014">
    <property type="entry name" value="ALPHA_CONOTOXIN"/>
    <property type="match status" value="1"/>
</dbReference>
<feature type="signal peptide" evidence="2">
    <location>
        <begin position="1"/>
        <end position="22"/>
    </location>
</feature>
<feature type="propeptide" id="PRO_0000234823" evidence="3">
    <location>
        <begin position="23"/>
        <end position="47"/>
    </location>
</feature>
<feature type="peptide" id="PRO_0000234824" description="Conotoxin VxVIA">
    <location>
        <begin position="48"/>
        <end position="74"/>
    </location>
</feature>
<feature type="disulfide bond" evidence="1">
    <location>
        <begin position="48"/>
        <end position="62"/>
    </location>
</feature>
<feature type="disulfide bond" evidence="1">
    <location>
        <begin position="55"/>
        <end position="66"/>
    </location>
</feature>
<feature type="disulfide bond" evidence="1">
    <location>
        <begin position="61"/>
        <end position="73"/>
    </location>
</feature>
<protein>
    <recommendedName>
        <fullName>Conotoxin VxVIA</fullName>
    </recommendedName>
    <alternativeName>
        <fullName>Conotoxin vx6a</fullName>
    </alternativeName>
</protein>
<name>O16A_CONVX</name>
<keyword id="KW-0165">Cleavage on pair of basic residues</keyword>
<keyword id="KW-0903">Direct protein sequencing</keyword>
<keyword id="KW-1015">Disulfide bond</keyword>
<keyword id="KW-0960">Knottin</keyword>
<keyword id="KW-0528">Neurotoxin</keyword>
<keyword id="KW-0964">Secreted</keyword>
<keyword id="KW-0732">Signal</keyword>
<keyword id="KW-0800">Toxin</keyword>
<reference key="1">
    <citation type="journal article" date="2006" name="Toxicon">
        <title>Two novel O-superfamily conotoxins from Conus vexillum.</title>
        <authorList>
            <person name="Jiang H."/>
            <person name="Xu C.-Q."/>
            <person name="Wang C.-Z."/>
            <person name="Fan C.-X."/>
            <person name="Zhao T.-Y."/>
            <person name="Chen J.-S."/>
            <person name="Chi C.-W."/>
        </authorList>
    </citation>
    <scope>NUCLEOTIDE SEQUENCE [MRNA]</scope>
    <scope>PROTEIN SEQUENCE OF 48-74</scope>
    <scope>SYNTHESIS OF 48-74</scope>
    <scope>FUNCTION</scope>
    <scope>MASS SPECTROMETRY</scope>
    <source>
        <tissue>Venom</tissue>
        <tissue>Venom duct</tissue>
    </source>
</reference>
<sequence length="74" mass="8118">MKLTCVLIIAVLFLTAYQLATAASHAKGKQKHRALRPADKHFRFTKRCNNRGGGCSQHPHCCSGTCNKTFGVCL</sequence>
<organism>
    <name type="scientific">Conus vexillum</name>
    <name type="common">Flag cone</name>
    <dbReference type="NCBI Taxonomy" id="89431"/>
    <lineage>
        <taxon>Eukaryota</taxon>
        <taxon>Metazoa</taxon>
        <taxon>Spiralia</taxon>
        <taxon>Lophotrochozoa</taxon>
        <taxon>Mollusca</taxon>
        <taxon>Gastropoda</taxon>
        <taxon>Caenogastropoda</taxon>
        <taxon>Neogastropoda</taxon>
        <taxon>Conoidea</taxon>
        <taxon>Conidae</taxon>
        <taxon>Conus</taxon>
        <taxon>Rhizoconus</taxon>
    </lineage>
</organism>
<accession>Q86RA3</accession>